<comment type="function">
    <text evidence="2">Catalyzes the reversible transfer of the terminal phosphate group between ATP and AMP. Plays an important role in cellular energy homeostasis and in adenine nucleotide metabolism.</text>
</comment>
<comment type="catalytic activity">
    <reaction evidence="2">
        <text>AMP + ATP = 2 ADP</text>
        <dbReference type="Rhea" id="RHEA:12973"/>
        <dbReference type="ChEBI" id="CHEBI:30616"/>
        <dbReference type="ChEBI" id="CHEBI:456215"/>
        <dbReference type="ChEBI" id="CHEBI:456216"/>
        <dbReference type="EC" id="2.7.4.3"/>
    </reaction>
</comment>
<comment type="pathway">
    <text evidence="2">Purine metabolism; AMP biosynthesis via salvage pathway; AMP from ADP: step 1/1.</text>
</comment>
<comment type="subunit">
    <text evidence="2">Monomer.</text>
</comment>
<comment type="subcellular location">
    <subcellularLocation>
        <location evidence="2">Cytoplasm</location>
    </subcellularLocation>
</comment>
<comment type="domain">
    <text evidence="2">Consists of three domains, a large central CORE domain and two small peripheral domains, NMPbind and LID, which undergo movements during catalysis. The LID domain closes over the site of phosphoryl transfer upon ATP binding. Assembling and dissambling the active center during each catalytic cycle provides an effective means to prevent ATP hydrolysis.</text>
</comment>
<comment type="similarity">
    <text evidence="2">Belongs to the adenylate kinase family.</text>
</comment>
<evidence type="ECO:0000250" key="1"/>
<evidence type="ECO:0000255" key="2">
    <source>
        <dbReference type="HAMAP-Rule" id="MF_00235"/>
    </source>
</evidence>
<sequence>MRIILLGAPGAGKGTQAQFIMEKYGIPQISTGDMLRAAVKSGSELGKQAKDIMDAGKLVTDELVIALVKERIAQEDCRNGFLLDGFPRTIPQADAMKEAGINVDYVLEFDVPDELIVDRIVGRRVHAPSGRVYHVKFNPPKVEGKDDVTGEELTTRKDDQEETVRKRLVEYHQMTAPLIGYYSKEAEAGNTKYAKVDGTKPVAEVRADLEKILG</sequence>
<name>KAD_SHIBS</name>
<protein>
    <recommendedName>
        <fullName evidence="2">Adenylate kinase</fullName>
        <shortName evidence="2">AK</shortName>
        <ecNumber evidence="2">2.7.4.3</ecNumber>
    </recommendedName>
    <alternativeName>
        <fullName evidence="2">ATP-AMP transphosphorylase</fullName>
    </alternativeName>
    <alternativeName>
        <fullName evidence="2">ATP:AMP phosphotransferase</fullName>
    </alternativeName>
    <alternativeName>
        <fullName evidence="2">Adenylate monophosphate kinase</fullName>
    </alternativeName>
</protein>
<accession>Q325C2</accession>
<reference key="1">
    <citation type="journal article" date="2005" name="Nucleic Acids Res.">
        <title>Genome dynamics and diversity of Shigella species, the etiologic agents of bacillary dysentery.</title>
        <authorList>
            <person name="Yang F."/>
            <person name="Yang J."/>
            <person name="Zhang X."/>
            <person name="Chen L."/>
            <person name="Jiang Y."/>
            <person name="Yan Y."/>
            <person name="Tang X."/>
            <person name="Wang J."/>
            <person name="Xiong Z."/>
            <person name="Dong J."/>
            <person name="Xue Y."/>
            <person name="Zhu Y."/>
            <person name="Xu X."/>
            <person name="Sun L."/>
            <person name="Chen S."/>
            <person name="Nie H."/>
            <person name="Peng J."/>
            <person name="Xu J."/>
            <person name="Wang Y."/>
            <person name="Yuan Z."/>
            <person name="Wen Y."/>
            <person name="Yao Z."/>
            <person name="Shen Y."/>
            <person name="Qiang B."/>
            <person name="Hou Y."/>
            <person name="Yu J."/>
            <person name="Jin Q."/>
        </authorList>
    </citation>
    <scope>NUCLEOTIDE SEQUENCE [LARGE SCALE GENOMIC DNA]</scope>
    <source>
        <strain>Sb227</strain>
    </source>
</reference>
<organism>
    <name type="scientific">Shigella boydii serotype 4 (strain Sb227)</name>
    <dbReference type="NCBI Taxonomy" id="300268"/>
    <lineage>
        <taxon>Bacteria</taxon>
        <taxon>Pseudomonadati</taxon>
        <taxon>Pseudomonadota</taxon>
        <taxon>Gammaproteobacteria</taxon>
        <taxon>Enterobacterales</taxon>
        <taxon>Enterobacteriaceae</taxon>
        <taxon>Shigella</taxon>
    </lineage>
</organism>
<gene>
    <name evidence="2" type="primary">adk</name>
    <name type="ordered locus">SBO_0374</name>
</gene>
<proteinExistence type="inferred from homology"/>
<dbReference type="EC" id="2.7.4.3" evidence="2"/>
<dbReference type="EMBL" id="CP000036">
    <property type="protein sequence ID" value="ABB65086.1"/>
    <property type="molecule type" value="Genomic_DNA"/>
</dbReference>
<dbReference type="RefSeq" id="WP_001220233.1">
    <property type="nucleotide sequence ID" value="NC_007613.1"/>
</dbReference>
<dbReference type="SMR" id="Q325C2"/>
<dbReference type="GeneID" id="75170492"/>
<dbReference type="KEGG" id="sbo:SBO_0374"/>
<dbReference type="HOGENOM" id="CLU_032354_1_2_6"/>
<dbReference type="UniPathway" id="UPA00588">
    <property type="reaction ID" value="UER00649"/>
</dbReference>
<dbReference type="Proteomes" id="UP000007067">
    <property type="component" value="Chromosome"/>
</dbReference>
<dbReference type="GO" id="GO:0005737">
    <property type="term" value="C:cytoplasm"/>
    <property type="evidence" value="ECO:0007669"/>
    <property type="project" value="UniProtKB-SubCell"/>
</dbReference>
<dbReference type="GO" id="GO:0004017">
    <property type="term" value="F:adenylate kinase activity"/>
    <property type="evidence" value="ECO:0007669"/>
    <property type="project" value="UniProtKB-UniRule"/>
</dbReference>
<dbReference type="GO" id="GO:0005524">
    <property type="term" value="F:ATP binding"/>
    <property type="evidence" value="ECO:0007669"/>
    <property type="project" value="UniProtKB-UniRule"/>
</dbReference>
<dbReference type="GO" id="GO:0044209">
    <property type="term" value="P:AMP salvage"/>
    <property type="evidence" value="ECO:0007669"/>
    <property type="project" value="UniProtKB-UniRule"/>
</dbReference>
<dbReference type="CDD" id="cd01428">
    <property type="entry name" value="ADK"/>
    <property type="match status" value="1"/>
</dbReference>
<dbReference type="FunFam" id="3.40.50.300:FF:000106">
    <property type="entry name" value="Adenylate kinase mitochondrial"/>
    <property type="match status" value="1"/>
</dbReference>
<dbReference type="Gene3D" id="3.40.50.300">
    <property type="entry name" value="P-loop containing nucleotide triphosphate hydrolases"/>
    <property type="match status" value="1"/>
</dbReference>
<dbReference type="HAMAP" id="MF_00235">
    <property type="entry name" value="Adenylate_kinase_Adk"/>
    <property type="match status" value="1"/>
</dbReference>
<dbReference type="InterPro" id="IPR006259">
    <property type="entry name" value="Adenyl_kin_sub"/>
</dbReference>
<dbReference type="InterPro" id="IPR000850">
    <property type="entry name" value="Adenylat/UMP-CMP_kin"/>
</dbReference>
<dbReference type="InterPro" id="IPR033690">
    <property type="entry name" value="Adenylat_kinase_CS"/>
</dbReference>
<dbReference type="InterPro" id="IPR007862">
    <property type="entry name" value="Adenylate_kinase_lid-dom"/>
</dbReference>
<dbReference type="InterPro" id="IPR027417">
    <property type="entry name" value="P-loop_NTPase"/>
</dbReference>
<dbReference type="NCBIfam" id="TIGR01351">
    <property type="entry name" value="adk"/>
    <property type="match status" value="1"/>
</dbReference>
<dbReference type="NCBIfam" id="NF001379">
    <property type="entry name" value="PRK00279.1-1"/>
    <property type="match status" value="1"/>
</dbReference>
<dbReference type="NCBIfam" id="NF001380">
    <property type="entry name" value="PRK00279.1-2"/>
    <property type="match status" value="1"/>
</dbReference>
<dbReference type="NCBIfam" id="NF001381">
    <property type="entry name" value="PRK00279.1-3"/>
    <property type="match status" value="1"/>
</dbReference>
<dbReference type="NCBIfam" id="NF011100">
    <property type="entry name" value="PRK14527.1"/>
    <property type="match status" value="1"/>
</dbReference>
<dbReference type="PANTHER" id="PTHR23359">
    <property type="entry name" value="NUCLEOTIDE KINASE"/>
    <property type="match status" value="1"/>
</dbReference>
<dbReference type="Pfam" id="PF00406">
    <property type="entry name" value="ADK"/>
    <property type="match status" value="1"/>
</dbReference>
<dbReference type="Pfam" id="PF05191">
    <property type="entry name" value="ADK_lid"/>
    <property type="match status" value="1"/>
</dbReference>
<dbReference type="PRINTS" id="PR00094">
    <property type="entry name" value="ADENYLTKNASE"/>
</dbReference>
<dbReference type="SUPFAM" id="SSF52540">
    <property type="entry name" value="P-loop containing nucleoside triphosphate hydrolases"/>
    <property type="match status" value="1"/>
</dbReference>
<dbReference type="PROSITE" id="PS00113">
    <property type="entry name" value="ADENYLATE_KINASE"/>
    <property type="match status" value="1"/>
</dbReference>
<feature type="chain" id="PRO_1000058904" description="Adenylate kinase">
    <location>
        <begin position="1"/>
        <end position="214"/>
    </location>
</feature>
<feature type="region of interest" description="NMP" evidence="2">
    <location>
        <begin position="30"/>
        <end position="59"/>
    </location>
</feature>
<feature type="region of interest" description="LID">
    <location>
        <begin position="122"/>
        <end position="159"/>
    </location>
</feature>
<feature type="binding site" evidence="2">
    <location>
        <begin position="10"/>
        <end position="15"/>
    </location>
    <ligand>
        <name>ATP</name>
        <dbReference type="ChEBI" id="CHEBI:30616"/>
    </ligand>
</feature>
<feature type="binding site" evidence="2">
    <location>
        <position position="31"/>
    </location>
    <ligand>
        <name>AMP</name>
        <dbReference type="ChEBI" id="CHEBI:456215"/>
    </ligand>
</feature>
<feature type="binding site" evidence="2">
    <location>
        <position position="36"/>
    </location>
    <ligand>
        <name>AMP</name>
        <dbReference type="ChEBI" id="CHEBI:456215"/>
    </ligand>
</feature>
<feature type="binding site" evidence="2">
    <location>
        <begin position="57"/>
        <end position="59"/>
    </location>
    <ligand>
        <name>AMP</name>
        <dbReference type="ChEBI" id="CHEBI:456215"/>
    </ligand>
</feature>
<feature type="binding site" evidence="2">
    <location>
        <begin position="85"/>
        <end position="88"/>
    </location>
    <ligand>
        <name>AMP</name>
        <dbReference type="ChEBI" id="CHEBI:456215"/>
    </ligand>
</feature>
<feature type="binding site" evidence="2">
    <location>
        <position position="92"/>
    </location>
    <ligand>
        <name>AMP</name>
        <dbReference type="ChEBI" id="CHEBI:456215"/>
    </ligand>
</feature>
<feature type="binding site" evidence="2">
    <location>
        <position position="123"/>
    </location>
    <ligand>
        <name>ATP</name>
        <dbReference type="ChEBI" id="CHEBI:30616"/>
    </ligand>
</feature>
<feature type="binding site" evidence="2">
    <location>
        <begin position="132"/>
        <end position="133"/>
    </location>
    <ligand>
        <name>ATP</name>
        <dbReference type="ChEBI" id="CHEBI:30616"/>
    </ligand>
</feature>
<feature type="binding site" evidence="2">
    <location>
        <position position="156"/>
    </location>
    <ligand>
        <name>AMP</name>
        <dbReference type="ChEBI" id="CHEBI:456215"/>
    </ligand>
</feature>
<feature type="binding site" evidence="2">
    <location>
        <position position="167"/>
    </location>
    <ligand>
        <name>AMP</name>
        <dbReference type="ChEBI" id="CHEBI:456215"/>
    </ligand>
</feature>
<feature type="binding site" evidence="2">
    <location>
        <position position="200"/>
    </location>
    <ligand>
        <name>ATP</name>
        <dbReference type="ChEBI" id="CHEBI:30616"/>
    </ligand>
</feature>
<feature type="modified residue" description="N6-acetyllysine" evidence="1">
    <location>
        <position position="192"/>
    </location>
</feature>
<keyword id="KW-0007">Acetylation</keyword>
<keyword id="KW-0067">ATP-binding</keyword>
<keyword id="KW-0963">Cytoplasm</keyword>
<keyword id="KW-0418">Kinase</keyword>
<keyword id="KW-0545">Nucleotide biosynthesis</keyword>
<keyword id="KW-0547">Nucleotide-binding</keyword>
<keyword id="KW-0808">Transferase</keyword>